<comment type="function">
    <text evidence="2">Involved in the biosynthesis of L2/HNK-1 carbohydrate epitope on glycoproteins. Can also play a role in glycosaminoglycan biosynthesis. Substrates include asialo-orosomucoid (ASOR), asialo-fetuin, and asialo-neural cell adhesion molecule. Requires sphingomyelin for activity: stearoyl-sphingomyelin was the most effective, followed by palmitoyl-sphingomyelin and lignoceroyl-sphingomyelin. Activity was demonstrated only for sphingomyelin with a saturated fatty acid and not for that with an unsaturated fatty acid, regardless of the length of the acyl group.</text>
</comment>
<comment type="catalytic activity">
    <reaction evidence="2">
        <text>3-O-(beta-D-galactosyl-(1-&gt;3)-beta-D-galactosyl-(1-&gt;4)-beta-D-xylosyl)-L-seryl-[protein] + UDP-alpha-D-glucuronate = 3-O-(beta-D-GlcA-(1-&gt;3)-beta-D-Gal-(1-&gt;3)-beta-D-Gal-(1-&gt;4)-beta-D-Xyl)-L-seryl-[protein] + UDP + H(+)</text>
        <dbReference type="Rhea" id="RHEA:24168"/>
        <dbReference type="Rhea" id="RHEA-COMP:12571"/>
        <dbReference type="Rhea" id="RHEA-COMP:12573"/>
        <dbReference type="ChEBI" id="CHEBI:15378"/>
        <dbReference type="ChEBI" id="CHEBI:58052"/>
        <dbReference type="ChEBI" id="CHEBI:58223"/>
        <dbReference type="ChEBI" id="CHEBI:132090"/>
        <dbReference type="ChEBI" id="CHEBI:132093"/>
        <dbReference type="EC" id="2.4.1.135"/>
    </reaction>
</comment>
<comment type="cofactor">
    <cofactor evidence="2">
        <name>Mn(2+)</name>
        <dbReference type="ChEBI" id="CHEBI:29035"/>
    </cofactor>
</comment>
<comment type="pathway">
    <text>Protein modification; protein glycosylation.</text>
</comment>
<comment type="subunit">
    <text evidence="2">Homodimer. Interacts with SAR1A.</text>
</comment>
<comment type="subcellular location">
    <molecule>Isoform 1</molecule>
    <subcellularLocation>
        <location evidence="2">Golgi apparatus membrane</location>
        <topology evidence="2">Single-pass type II membrane protein</topology>
    </subcellularLocation>
    <subcellularLocation>
        <location evidence="2">Secreted</location>
    </subcellularLocation>
</comment>
<comment type="subcellular location">
    <molecule>Isoform 2</molecule>
    <subcellularLocation>
        <location evidence="2">Golgi apparatus membrane</location>
        <topology evidence="2">Single-pass type II membrane protein</topology>
    </subcellularLocation>
    <subcellularLocation>
        <location evidence="2">Endoplasmic reticulum membrane</location>
    </subcellularLocation>
    <subcellularLocation>
        <location evidence="2">Secreted</location>
    </subcellularLocation>
</comment>
<comment type="alternative products">
    <event type="alternative splicing"/>
    <isoform>
        <id>Q9CW73-1</id>
        <name>1</name>
        <name evidence="2">sGlcAT-P</name>
        <sequence type="displayed"/>
    </isoform>
    <isoform>
        <id>Q9CW73-2</id>
        <name>2</name>
        <name evidence="2">lGlcAT-P</name>
        <sequence type="described" ref="VSP_058539"/>
    </isoform>
</comment>
<comment type="PTM">
    <text evidence="2">The soluble form derives from the membrane form by proteolytic processing.</text>
</comment>
<comment type="similarity">
    <text evidence="5">Belongs to the glycosyltransferase 43 family.</text>
</comment>
<comment type="sequence caution" evidence="5">
    <conflict type="erroneous initiation">
        <sequence resource="EMBL-CDS" id="BAC31996"/>
    </conflict>
</comment>
<name>B3GA1_MOUSE</name>
<keyword id="KW-0025">Alternative splicing</keyword>
<keyword id="KW-0256">Endoplasmic reticulum</keyword>
<keyword id="KW-0325">Glycoprotein</keyword>
<keyword id="KW-0333">Golgi apparatus</keyword>
<keyword id="KW-0464">Manganese</keyword>
<keyword id="KW-0472">Membrane</keyword>
<keyword id="KW-0479">Metal-binding</keyword>
<keyword id="KW-0597">Phosphoprotein</keyword>
<keyword id="KW-1185">Reference proteome</keyword>
<keyword id="KW-0964">Secreted</keyword>
<keyword id="KW-0735">Signal-anchor</keyword>
<keyword id="KW-0808">Transferase</keyword>
<keyword id="KW-0812">Transmembrane</keyword>
<keyword id="KW-1133">Transmembrane helix</keyword>
<dbReference type="EC" id="2.4.1.135" evidence="2"/>
<dbReference type="EMBL" id="AB055781">
    <property type="protein sequence ID" value="BAB85676.1"/>
    <property type="molecule type" value="mRNA"/>
</dbReference>
<dbReference type="EMBL" id="AK003020">
    <property type="protein sequence ID" value="BAB22514.1"/>
    <property type="molecule type" value="mRNA"/>
</dbReference>
<dbReference type="EMBL" id="AK044599">
    <property type="protein sequence ID" value="BAC31996.1"/>
    <property type="status" value="ALT_INIT"/>
    <property type="molecule type" value="mRNA"/>
</dbReference>
<dbReference type="EMBL" id="AK082739">
    <property type="protein sequence ID" value="BAC38594.1"/>
    <property type="molecule type" value="mRNA"/>
</dbReference>
<dbReference type="EMBL" id="AC109831">
    <property type="status" value="NOT_ANNOTATED_CDS"/>
    <property type="molecule type" value="Genomic_DNA"/>
</dbReference>
<dbReference type="EMBL" id="AC161424">
    <property type="status" value="NOT_ANNOTATED_CDS"/>
    <property type="molecule type" value="Genomic_DNA"/>
</dbReference>
<dbReference type="EMBL" id="BC034655">
    <property type="protein sequence ID" value="AAH34655.1"/>
    <property type="molecule type" value="mRNA"/>
</dbReference>
<dbReference type="CCDS" id="CCDS22936.1">
    <molecule id="Q9CW73-1"/>
</dbReference>
<dbReference type="CCDS" id="CCDS80970.1">
    <molecule id="Q9CW73-2"/>
</dbReference>
<dbReference type="PIR" id="JC7828">
    <property type="entry name" value="JC7828"/>
</dbReference>
<dbReference type="RefSeq" id="NP_001297695.1">
    <molecule id="Q9CW73-2"/>
    <property type="nucleotide sequence ID" value="NM_001310766.1"/>
</dbReference>
<dbReference type="RefSeq" id="NP_084068.1">
    <molecule id="Q9CW73-1"/>
    <property type="nucleotide sequence ID" value="NM_029792.1"/>
</dbReference>
<dbReference type="RefSeq" id="XP_006510737.1">
    <molecule id="Q9CW73-1"/>
    <property type="nucleotide sequence ID" value="XM_006510674.3"/>
</dbReference>
<dbReference type="SMR" id="Q9CW73"/>
<dbReference type="FunCoup" id="Q9CW73">
    <property type="interactions" value="638"/>
</dbReference>
<dbReference type="STRING" id="10090.ENSMUSP00000124067"/>
<dbReference type="CAZy" id="GT43">
    <property type="family name" value="Glycosyltransferase Family 43"/>
</dbReference>
<dbReference type="GlyConnect" id="2318">
    <property type="glycosylation" value="3 N-Linked glycans (1 site)"/>
</dbReference>
<dbReference type="GlyCosmos" id="Q9CW73">
    <property type="glycosylation" value="3 sites, 3 glycans"/>
</dbReference>
<dbReference type="GlyGen" id="Q9CW73">
    <property type="glycosylation" value="3 sites, 4 N-linked glycans (1 site)"/>
</dbReference>
<dbReference type="iPTMnet" id="Q9CW73"/>
<dbReference type="PhosphoSitePlus" id="Q9CW73"/>
<dbReference type="PaxDb" id="10090-ENSMUSP00000125700"/>
<dbReference type="ProteomicsDB" id="273456">
    <molecule id="Q9CW73-1"/>
</dbReference>
<dbReference type="ProteomicsDB" id="273457">
    <molecule id="Q9CW73-2"/>
</dbReference>
<dbReference type="Antibodypedia" id="3739">
    <property type="antibodies" value="1600 antibodies from 46 providers"/>
</dbReference>
<dbReference type="DNASU" id="76898"/>
<dbReference type="Ensembl" id="ENSMUST00000115269.9">
    <molecule id="Q9CW73-2"/>
    <property type="protein sequence ID" value="ENSMUSP00000110924.3"/>
    <property type="gene ID" value="ENSMUSG00000045994.18"/>
</dbReference>
<dbReference type="Ensembl" id="ENSMUST00000159799.8">
    <molecule id="Q9CW73-2"/>
    <property type="protein sequence ID" value="ENSMUSP00000124438.2"/>
    <property type="gene ID" value="ENSMUSG00000045994.18"/>
</dbReference>
<dbReference type="Ensembl" id="ENSMUST00000160899.8">
    <molecule id="Q9CW73-2"/>
    <property type="protein sequence ID" value="ENSMUSP00000124067.2"/>
    <property type="gene ID" value="ENSMUSG00000045994.18"/>
</dbReference>
<dbReference type="Ensembl" id="ENSMUST00000161115.8">
    <molecule id="Q9CW73-1"/>
    <property type="protein sequence ID" value="ENSMUSP00000125700.2"/>
    <property type="gene ID" value="ENSMUSG00000045994.18"/>
</dbReference>
<dbReference type="Ensembl" id="ENSMUST00000161431.3">
    <molecule id="Q9CW73-1"/>
    <property type="protein sequence ID" value="ENSMUSP00000124752.3"/>
    <property type="gene ID" value="ENSMUSG00000045994.18"/>
</dbReference>
<dbReference type="GeneID" id="76898"/>
<dbReference type="KEGG" id="mmu:76898"/>
<dbReference type="UCSC" id="uc009opo.1">
    <property type="organism name" value="mouse"/>
</dbReference>
<dbReference type="UCSC" id="uc009opp.1">
    <property type="organism name" value="mouse"/>
</dbReference>
<dbReference type="AGR" id="MGI:1924148"/>
<dbReference type="CTD" id="27087"/>
<dbReference type="MGI" id="MGI:1924148">
    <property type="gene designation" value="B3gat1"/>
</dbReference>
<dbReference type="VEuPathDB" id="HostDB:ENSMUSG00000045994"/>
<dbReference type="eggNOG" id="KOG1476">
    <property type="taxonomic scope" value="Eukaryota"/>
</dbReference>
<dbReference type="GeneTree" id="ENSGT00940000157165"/>
<dbReference type="InParanoid" id="Q9CW73"/>
<dbReference type="OMA" id="DSREYCM"/>
<dbReference type="OrthoDB" id="21557at9989"/>
<dbReference type="PhylomeDB" id="Q9CW73"/>
<dbReference type="TreeFam" id="TF313522"/>
<dbReference type="Reactome" id="R-MMU-1971475">
    <property type="pathway name" value="A tetrasaccharide linker sequence is required for GAG synthesis"/>
</dbReference>
<dbReference type="UniPathway" id="UPA00378"/>
<dbReference type="BioGRID-ORCS" id="76898">
    <property type="hits" value="1 hit in 79 CRISPR screens"/>
</dbReference>
<dbReference type="ChiTaRS" id="B3gat1">
    <property type="organism name" value="mouse"/>
</dbReference>
<dbReference type="PRO" id="PR:Q9CW73"/>
<dbReference type="Proteomes" id="UP000000589">
    <property type="component" value="Chromosome 9"/>
</dbReference>
<dbReference type="RNAct" id="Q9CW73">
    <property type="molecule type" value="protein"/>
</dbReference>
<dbReference type="Bgee" id="ENSMUSG00000045994">
    <property type="expression patterns" value="Expressed in cortical plate and 106 other cell types or tissues"/>
</dbReference>
<dbReference type="GO" id="GO:0005789">
    <property type="term" value="C:endoplasmic reticulum membrane"/>
    <property type="evidence" value="ECO:0000250"/>
    <property type="project" value="UniProtKB"/>
</dbReference>
<dbReference type="GO" id="GO:0005576">
    <property type="term" value="C:extracellular region"/>
    <property type="evidence" value="ECO:0007669"/>
    <property type="project" value="UniProtKB-SubCell"/>
</dbReference>
<dbReference type="GO" id="GO:0005794">
    <property type="term" value="C:Golgi apparatus"/>
    <property type="evidence" value="ECO:0000266"/>
    <property type="project" value="MGI"/>
</dbReference>
<dbReference type="GO" id="GO:0000139">
    <property type="term" value="C:Golgi membrane"/>
    <property type="evidence" value="ECO:0000250"/>
    <property type="project" value="UniProtKB"/>
</dbReference>
<dbReference type="GO" id="GO:0015018">
    <property type="term" value="F:galactosylgalactosylxylosylprotein 3-beta-glucuronosyltransferase activity"/>
    <property type="evidence" value="ECO:0000315"/>
    <property type="project" value="MGI"/>
</dbReference>
<dbReference type="GO" id="GO:0046872">
    <property type="term" value="F:metal ion binding"/>
    <property type="evidence" value="ECO:0007669"/>
    <property type="project" value="UniProtKB-KW"/>
</dbReference>
<dbReference type="GO" id="GO:0071456">
    <property type="term" value="P:cellular response to hypoxia"/>
    <property type="evidence" value="ECO:0007669"/>
    <property type="project" value="Ensembl"/>
</dbReference>
<dbReference type="GO" id="GO:0006024">
    <property type="term" value="P:glycosaminoglycan biosynthetic process"/>
    <property type="evidence" value="ECO:0000315"/>
    <property type="project" value="MGI"/>
</dbReference>
<dbReference type="GO" id="GO:0006486">
    <property type="term" value="P:protein glycosylation"/>
    <property type="evidence" value="ECO:0007669"/>
    <property type="project" value="UniProtKB-UniPathway"/>
</dbReference>
<dbReference type="GO" id="GO:0008542">
    <property type="term" value="P:visual learning"/>
    <property type="evidence" value="ECO:0000315"/>
    <property type="project" value="MGI"/>
</dbReference>
<dbReference type="CDD" id="cd00218">
    <property type="entry name" value="GlcAT-I"/>
    <property type="match status" value="1"/>
</dbReference>
<dbReference type="FunFam" id="3.90.550.10:FF:000010">
    <property type="entry name" value="Galactosylgalactosylxylosylprotein 3-beta-glucuronosyltransferase"/>
    <property type="match status" value="1"/>
</dbReference>
<dbReference type="Gene3D" id="3.90.550.10">
    <property type="entry name" value="Spore Coat Polysaccharide Biosynthesis Protein SpsA, Chain A"/>
    <property type="match status" value="1"/>
</dbReference>
<dbReference type="InterPro" id="IPR005027">
    <property type="entry name" value="Glyco_trans_43"/>
</dbReference>
<dbReference type="InterPro" id="IPR029044">
    <property type="entry name" value="Nucleotide-diphossugar_trans"/>
</dbReference>
<dbReference type="PANTHER" id="PTHR10896:SF21">
    <property type="entry name" value="GALACTOSYLGALACTOSYLXYLOSYLPROTEIN 3-BETA-GLUCURONOSYLTRANSFERASE 1"/>
    <property type="match status" value="1"/>
</dbReference>
<dbReference type="PANTHER" id="PTHR10896">
    <property type="entry name" value="GALACTOSYLGALACTOSYLXYLOSYLPROTEIN 3-BETA-GLUCURONOSYLTRANSFERASE BETA-1,3-GLUCURONYLTRANSFERASE"/>
    <property type="match status" value="1"/>
</dbReference>
<dbReference type="Pfam" id="PF03360">
    <property type="entry name" value="Glyco_transf_43"/>
    <property type="match status" value="1"/>
</dbReference>
<dbReference type="SUPFAM" id="SSF53448">
    <property type="entry name" value="Nucleotide-diphospho-sugar transferases"/>
    <property type="match status" value="1"/>
</dbReference>
<feature type="chain" id="PRO_0000195168" description="Galactosylgalactosylxylosylprotein 3-beta-glucuronosyltransferase 1">
    <location>
        <begin position="1"/>
        <end position="334"/>
    </location>
</feature>
<feature type="topological domain" description="Cytoplasmic" evidence="4">
    <location>
        <begin position="1"/>
        <end position="6"/>
    </location>
</feature>
<feature type="transmembrane region" description="Helical; Signal-anchor for type II membrane protein" evidence="4">
    <location>
        <begin position="7"/>
        <end position="27"/>
    </location>
</feature>
<feature type="topological domain" description="Lumenal" evidence="4">
    <location>
        <begin position="28"/>
        <end position="334"/>
    </location>
</feature>
<feature type="region of interest" description="Essential for transport from endoplasmic reticulum to Golgi apparatus and interaction with SAR1A" evidence="2">
    <location>
        <begin position="3"/>
        <end position="5"/>
    </location>
</feature>
<feature type="region of interest" description="Interaction with galactose moiety of substrate glycoprotein" evidence="1">
    <location>
        <begin position="245"/>
        <end position="254"/>
    </location>
</feature>
<feature type="active site" description="Proton donor/acceptor" evidence="1">
    <location>
        <position position="284"/>
    </location>
</feature>
<feature type="binding site" evidence="1">
    <location>
        <begin position="91"/>
        <end position="93"/>
    </location>
    <ligand>
        <name>UDP-alpha-D-glucuronate</name>
        <dbReference type="ChEBI" id="CHEBI:58052"/>
    </ligand>
</feature>
<feature type="binding site" evidence="1">
    <location>
        <position position="122"/>
    </location>
    <ligand>
        <name>UDP-alpha-D-glucuronate</name>
        <dbReference type="ChEBI" id="CHEBI:58052"/>
    </ligand>
</feature>
<feature type="binding site" evidence="1">
    <location>
        <position position="165"/>
    </location>
    <ligand>
        <name>UDP-alpha-D-glucuronate</name>
        <dbReference type="ChEBI" id="CHEBI:58052"/>
    </ligand>
</feature>
<feature type="binding site" evidence="1">
    <location>
        <position position="170"/>
    </location>
    <ligand>
        <name>UDP-alpha-D-glucuronate</name>
        <dbReference type="ChEBI" id="CHEBI:58052"/>
    </ligand>
</feature>
<feature type="binding site" evidence="1">
    <location>
        <begin position="195"/>
        <end position="197"/>
    </location>
    <ligand>
        <name>UDP-alpha-D-glucuronate</name>
        <dbReference type="ChEBI" id="CHEBI:58052"/>
    </ligand>
</feature>
<feature type="binding site" evidence="1">
    <location>
        <position position="197"/>
    </location>
    <ligand>
        <name>Mn(2+)</name>
        <dbReference type="ChEBI" id="CHEBI:29035"/>
    </ligand>
</feature>
<feature type="binding site" evidence="1">
    <location>
        <begin position="311"/>
        <end position="313"/>
    </location>
    <ligand>
        <name>UDP-alpha-D-glucuronate</name>
        <dbReference type="ChEBI" id="CHEBI:58052"/>
    </ligand>
</feature>
<feature type="site" description="Interaction with galactose moiety of substrate glycoprotein" evidence="1">
    <location>
        <position position="228"/>
    </location>
</feature>
<feature type="site" description="Interaction with galactose moiety of substrate glycoprotein" evidence="1">
    <location>
        <position position="321"/>
    </location>
</feature>
<feature type="modified residue" description="Phosphothreonine" evidence="2">
    <location>
        <position position="103"/>
    </location>
</feature>
<feature type="modified residue" description="Phosphothreonine" evidence="2">
    <location>
        <position position="108"/>
    </location>
</feature>
<feature type="glycosylation site" description="N-linked (GlcNAc...) asparagine" evidence="4">
    <location>
        <position position="140"/>
    </location>
</feature>
<feature type="glycosylation site" description="N-linked (GlcNAc...) asparagine" evidence="4">
    <location>
        <position position="184"/>
    </location>
</feature>
<feature type="glycosylation site" description="N-linked (GlcNAc...) asparagine" evidence="4">
    <location>
        <position position="303"/>
    </location>
</feature>
<feature type="splice variant" id="VSP_058539" description="In isoform 2.">
    <original>M</original>
    <variation>MGNEELWVQPALEM</variation>
    <location>
        <position position="1"/>
    </location>
</feature>
<feature type="sequence conflict" description="In Ref. 2; BAC31996." evidence="5" ref="2">
    <original>E</original>
    <variation>G</variation>
    <location>
        <position position="121"/>
    </location>
</feature>
<organism>
    <name type="scientific">Mus musculus</name>
    <name type="common">Mouse</name>
    <dbReference type="NCBI Taxonomy" id="10090"/>
    <lineage>
        <taxon>Eukaryota</taxon>
        <taxon>Metazoa</taxon>
        <taxon>Chordata</taxon>
        <taxon>Craniata</taxon>
        <taxon>Vertebrata</taxon>
        <taxon>Euteleostomi</taxon>
        <taxon>Mammalia</taxon>
        <taxon>Eutheria</taxon>
        <taxon>Euarchontoglires</taxon>
        <taxon>Glires</taxon>
        <taxon>Rodentia</taxon>
        <taxon>Myomorpha</taxon>
        <taxon>Muroidea</taxon>
        <taxon>Muridae</taxon>
        <taxon>Murinae</taxon>
        <taxon>Mus</taxon>
        <taxon>Mus</taxon>
    </lineage>
</organism>
<accession>Q9CW73</accession>
<accession>Q6PIG8</accession>
<accession>Q8BXN8</accession>
<accession>Q8R531</accession>
<protein>
    <recommendedName>
        <fullName evidence="3">Galactosylgalactosylxylosylprotein 3-beta-glucuronosyltransferase 1</fullName>
        <ecNumber evidence="2">2.4.1.135</ecNumber>
    </recommendedName>
    <alternativeName>
        <fullName>Beta-1,3-glucuronyltransferase 1</fullName>
    </alternativeName>
    <alternativeName>
        <fullName>Glucuronosyltransferase P</fullName>
        <shortName evidence="2">GlcAT-P</shortName>
    </alternativeName>
    <alternativeName>
        <fullName>UDP-GlcUA:glycoprotein beta-1,3-glucuronyltransferase</fullName>
        <shortName>GlcUAT-P</shortName>
    </alternativeName>
</protein>
<evidence type="ECO:0000250" key="1"/>
<evidence type="ECO:0000250" key="2">
    <source>
        <dbReference type="UniProtKB" id="O35789"/>
    </source>
</evidence>
<evidence type="ECO:0000250" key="3">
    <source>
        <dbReference type="UniProtKB" id="Q9P2W7"/>
    </source>
</evidence>
<evidence type="ECO:0000255" key="4"/>
<evidence type="ECO:0000305" key="5"/>
<evidence type="ECO:0000312" key="6">
    <source>
        <dbReference type="MGI" id="MGI:1924148"/>
    </source>
</evidence>
<proteinExistence type="evidence at transcript level"/>
<sequence length="334" mass="38237">MPKRRDILAIVLIVLPWTLLITVWHQSSLAPLLAVHKDEGSDPRHEAPPGADPREYCMSDRDIVEVVRTEYVYTRPPPWSDTLPTIHVVTPTYSRPVQKAELTRMANTLLHVPNLHWLVVEDAPRRTPLTARLLRDTGLNYTHLHVETPRNYKLRGDARDPRIPRGTMQRNLALRWLRETFPRNSTQPGVVYFADDDNTYSLELFEEMRSTRRVSVWPVAFVGGLRYEAPRVNGAGKVVGWKTVFDPHRPFAIDMAGFAVNLRLILQRSQAYFKLRGVKGGYQESSLLRELVTLNDLEPKAANCTKILVWHTRTEKPVLVNEGKKGFTDPSVEI</sequence>
<gene>
    <name evidence="6" type="primary">B3gat1</name>
</gene>
<reference key="1">
    <citation type="journal article" date="2002" name="J. Biochem.">
        <title>Molecular cloning and genomic analysis of mouse glucuronyltransferase involved in biosynthesis of the HNK-1 epitope.</title>
        <authorList>
            <person name="Yamamoto S."/>
            <person name="Oka S."/>
            <person name="Saito-Ohara F."/>
            <person name="Inazawa J."/>
            <person name="Kawasaki T."/>
        </authorList>
    </citation>
    <scope>NUCLEOTIDE SEQUENCE [MRNA] (ISOFORM 2)</scope>
</reference>
<reference key="2">
    <citation type="journal article" date="2005" name="Science">
        <title>The transcriptional landscape of the mammalian genome.</title>
        <authorList>
            <person name="Carninci P."/>
            <person name="Kasukawa T."/>
            <person name="Katayama S."/>
            <person name="Gough J."/>
            <person name="Frith M.C."/>
            <person name="Maeda N."/>
            <person name="Oyama R."/>
            <person name="Ravasi T."/>
            <person name="Lenhard B."/>
            <person name="Wells C."/>
            <person name="Kodzius R."/>
            <person name="Shimokawa K."/>
            <person name="Bajic V.B."/>
            <person name="Brenner S.E."/>
            <person name="Batalov S."/>
            <person name="Forrest A.R."/>
            <person name="Zavolan M."/>
            <person name="Davis M.J."/>
            <person name="Wilming L.G."/>
            <person name="Aidinis V."/>
            <person name="Allen J.E."/>
            <person name="Ambesi-Impiombato A."/>
            <person name="Apweiler R."/>
            <person name="Aturaliya R.N."/>
            <person name="Bailey T.L."/>
            <person name="Bansal M."/>
            <person name="Baxter L."/>
            <person name="Beisel K.W."/>
            <person name="Bersano T."/>
            <person name="Bono H."/>
            <person name="Chalk A.M."/>
            <person name="Chiu K.P."/>
            <person name="Choudhary V."/>
            <person name="Christoffels A."/>
            <person name="Clutterbuck D.R."/>
            <person name="Crowe M.L."/>
            <person name="Dalla E."/>
            <person name="Dalrymple B.P."/>
            <person name="de Bono B."/>
            <person name="Della Gatta G."/>
            <person name="di Bernardo D."/>
            <person name="Down T."/>
            <person name="Engstrom P."/>
            <person name="Fagiolini M."/>
            <person name="Faulkner G."/>
            <person name="Fletcher C.F."/>
            <person name="Fukushima T."/>
            <person name="Furuno M."/>
            <person name="Futaki S."/>
            <person name="Gariboldi M."/>
            <person name="Georgii-Hemming P."/>
            <person name="Gingeras T.R."/>
            <person name="Gojobori T."/>
            <person name="Green R.E."/>
            <person name="Gustincich S."/>
            <person name="Harbers M."/>
            <person name="Hayashi Y."/>
            <person name="Hensch T.K."/>
            <person name="Hirokawa N."/>
            <person name="Hill D."/>
            <person name="Huminiecki L."/>
            <person name="Iacono M."/>
            <person name="Ikeo K."/>
            <person name="Iwama A."/>
            <person name="Ishikawa T."/>
            <person name="Jakt M."/>
            <person name="Kanapin A."/>
            <person name="Katoh M."/>
            <person name="Kawasawa Y."/>
            <person name="Kelso J."/>
            <person name="Kitamura H."/>
            <person name="Kitano H."/>
            <person name="Kollias G."/>
            <person name="Krishnan S.P."/>
            <person name="Kruger A."/>
            <person name="Kummerfeld S.K."/>
            <person name="Kurochkin I.V."/>
            <person name="Lareau L.F."/>
            <person name="Lazarevic D."/>
            <person name="Lipovich L."/>
            <person name="Liu J."/>
            <person name="Liuni S."/>
            <person name="McWilliam S."/>
            <person name="Madan Babu M."/>
            <person name="Madera M."/>
            <person name="Marchionni L."/>
            <person name="Matsuda H."/>
            <person name="Matsuzawa S."/>
            <person name="Miki H."/>
            <person name="Mignone F."/>
            <person name="Miyake S."/>
            <person name="Morris K."/>
            <person name="Mottagui-Tabar S."/>
            <person name="Mulder N."/>
            <person name="Nakano N."/>
            <person name="Nakauchi H."/>
            <person name="Ng P."/>
            <person name="Nilsson R."/>
            <person name="Nishiguchi S."/>
            <person name="Nishikawa S."/>
            <person name="Nori F."/>
            <person name="Ohara O."/>
            <person name="Okazaki Y."/>
            <person name="Orlando V."/>
            <person name="Pang K.C."/>
            <person name="Pavan W.J."/>
            <person name="Pavesi G."/>
            <person name="Pesole G."/>
            <person name="Petrovsky N."/>
            <person name="Piazza S."/>
            <person name="Reed J."/>
            <person name="Reid J.F."/>
            <person name="Ring B.Z."/>
            <person name="Ringwald M."/>
            <person name="Rost B."/>
            <person name="Ruan Y."/>
            <person name="Salzberg S.L."/>
            <person name="Sandelin A."/>
            <person name="Schneider C."/>
            <person name="Schoenbach C."/>
            <person name="Sekiguchi K."/>
            <person name="Semple C.A."/>
            <person name="Seno S."/>
            <person name="Sessa L."/>
            <person name="Sheng Y."/>
            <person name="Shibata Y."/>
            <person name="Shimada H."/>
            <person name="Shimada K."/>
            <person name="Silva D."/>
            <person name="Sinclair B."/>
            <person name="Sperling S."/>
            <person name="Stupka E."/>
            <person name="Sugiura K."/>
            <person name="Sultana R."/>
            <person name="Takenaka Y."/>
            <person name="Taki K."/>
            <person name="Tammoja K."/>
            <person name="Tan S.L."/>
            <person name="Tang S."/>
            <person name="Taylor M.S."/>
            <person name="Tegner J."/>
            <person name="Teichmann S.A."/>
            <person name="Ueda H.R."/>
            <person name="van Nimwegen E."/>
            <person name="Verardo R."/>
            <person name="Wei C.L."/>
            <person name="Yagi K."/>
            <person name="Yamanishi H."/>
            <person name="Zabarovsky E."/>
            <person name="Zhu S."/>
            <person name="Zimmer A."/>
            <person name="Hide W."/>
            <person name="Bult C."/>
            <person name="Grimmond S.M."/>
            <person name="Teasdale R.D."/>
            <person name="Liu E.T."/>
            <person name="Brusic V."/>
            <person name="Quackenbush J."/>
            <person name="Wahlestedt C."/>
            <person name="Mattick J.S."/>
            <person name="Hume D.A."/>
            <person name="Kai C."/>
            <person name="Sasaki D."/>
            <person name="Tomaru Y."/>
            <person name="Fukuda S."/>
            <person name="Kanamori-Katayama M."/>
            <person name="Suzuki M."/>
            <person name="Aoki J."/>
            <person name="Arakawa T."/>
            <person name="Iida J."/>
            <person name="Imamura K."/>
            <person name="Itoh M."/>
            <person name="Kato T."/>
            <person name="Kawaji H."/>
            <person name="Kawagashira N."/>
            <person name="Kawashima T."/>
            <person name="Kojima M."/>
            <person name="Kondo S."/>
            <person name="Konno H."/>
            <person name="Nakano K."/>
            <person name="Ninomiya N."/>
            <person name="Nishio T."/>
            <person name="Okada M."/>
            <person name="Plessy C."/>
            <person name="Shibata K."/>
            <person name="Shiraki T."/>
            <person name="Suzuki S."/>
            <person name="Tagami M."/>
            <person name="Waki K."/>
            <person name="Watahiki A."/>
            <person name="Okamura-Oho Y."/>
            <person name="Suzuki H."/>
            <person name="Kawai J."/>
            <person name="Hayashizaki Y."/>
        </authorList>
    </citation>
    <scope>NUCLEOTIDE SEQUENCE [LARGE SCALE MRNA] (ISOFORMS 1 AND 2)</scope>
    <source>
        <strain>C57BL/6J</strain>
        <tissue>Brain</tissue>
        <tissue>Retina</tissue>
    </source>
</reference>
<reference key="3">
    <citation type="journal article" date="2009" name="PLoS Biol.">
        <title>Lineage-specific biology revealed by a finished genome assembly of the mouse.</title>
        <authorList>
            <person name="Church D.M."/>
            <person name="Goodstadt L."/>
            <person name="Hillier L.W."/>
            <person name="Zody M.C."/>
            <person name="Goldstein S."/>
            <person name="She X."/>
            <person name="Bult C.J."/>
            <person name="Agarwala R."/>
            <person name="Cherry J.L."/>
            <person name="DiCuccio M."/>
            <person name="Hlavina W."/>
            <person name="Kapustin Y."/>
            <person name="Meric P."/>
            <person name="Maglott D."/>
            <person name="Birtle Z."/>
            <person name="Marques A.C."/>
            <person name="Graves T."/>
            <person name="Zhou S."/>
            <person name="Teague B."/>
            <person name="Potamousis K."/>
            <person name="Churas C."/>
            <person name="Place M."/>
            <person name="Herschleb J."/>
            <person name="Runnheim R."/>
            <person name="Forrest D."/>
            <person name="Amos-Landgraf J."/>
            <person name="Schwartz D.C."/>
            <person name="Cheng Z."/>
            <person name="Lindblad-Toh K."/>
            <person name="Eichler E.E."/>
            <person name="Ponting C.P."/>
        </authorList>
    </citation>
    <scope>NUCLEOTIDE SEQUENCE [LARGE SCALE GENOMIC DNA]</scope>
    <source>
        <strain>C57BL/6J</strain>
        <tissue>Cerebellum</tissue>
    </source>
</reference>
<reference key="4">
    <citation type="journal article" date="2004" name="Genome Res.">
        <title>The status, quality, and expansion of the NIH full-length cDNA project: the Mammalian Gene Collection (MGC).</title>
        <authorList>
            <consortium name="The MGC Project Team"/>
        </authorList>
    </citation>
    <scope>NUCLEOTIDE SEQUENCE [LARGE SCALE MRNA] (ISOFORM 1)</scope>
    <source>
        <strain>C57BL/6J</strain>
        <tissue>Eye</tissue>
    </source>
</reference>